<protein>
    <recommendedName>
        <fullName evidence="4">Biotrophy-associated secreted protein 2</fullName>
    </recommendedName>
</protein>
<dbReference type="EMBL" id="FJ807765">
    <property type="protein sequence ID" value="ACQ73207.1"/>
    <property type="molecule type" value="Genomic_DNA"/>
</dbReference>
<dbReference type="EMBL" id="CM001234">
    <property type="protein sequence ID" value="EHA51344.1"/>
    <property type="molecule type" value="Genomic_DNA"/>
</dbReference>
<dbReference type="RefSeq" id="XP_003717663.1">
    <property type="nucleotide sequence ID" value="XM_003717615.1"/>
</dbReference>
<dbReference type="SMR" id="G5EI08"/>
<dbReference type="STRING" id="242507.G5EI08"/>
<dbReference type="GlyCosmos" id="G5EI08">
    <property type="glycosylation" value="1 site, No reported glycans"/>
</dbReference>
<dbReference type="EnsemblFungi" id="MGG_09693T0">
    <property type="protein sequence ID" value="MGG_09693T0"/>
    <property type="gene ID" value="MGG_09693"/>
</dbReference>
<dbReference type="GeneID" id="2680692"/>
<dbReference type="KEGG" id="mgr:MGG_09693"/>
<dbReference type="VEuPathDB" id="FungiDB:MGG_09693"/>
<dbReference type="eggNOG" id="ENOG502SURB">
    <property type="taxonomic scope" value="Eukaryota"/>
</dbReference>
<dbReference type="HOGENOM" id="CLU_180920_0_0_1"/>
<dbReference type="InParanoid" id="G5EI08"/>
<dbReference type="OMA" id="KQGCGFN"/>
<dbReference type="OrthoDB" id="2132010at2759"/>
<dbReference type="Proteomes" id="UP000009058">
    <property type="component" value="Chromosome 4"/>
</dbReference>
<dbReference type="GO" id="GO:0005576">
    <property type="term" value="C:extracellular region"/>
    <property type="evidence" value="ECO:0007669"/>
    <property type="project" value="UniProtKB-SubCell"/>
</dbReference>
<accession>G5EI08</accession>
<proteinExistence type="evidence at transcript level"/>
<gene>
    <name evidence="4" type="primary">BAS2</name>
    <name type="ORF">MGG_09693</name>
</gene>
<evidence type="ECO:0000255" key="1"/>
<evidence type="ECO:0000255" key="2">
    <source>
        <dbReference type="PROSITE-ProRule" id="PRU00498"/>
    </source>
</evidence>
<evidence type="ECO:0000269" key="3">
    <source>
    </source>
</evidence>
<evidence type="ECO:0000303" key="4">
    <source>
    </source>
</evidence>
<name>BAS2_PYRO7</name>
<organism>
    <name type="scientific">Pyricularia oryzae (strain 70-15 / ATCC MYA-4617 / FGSC 8958)</name>
    <name type="common">Rice blast fungus</name>
    <name type="synonym">Magnaporthe oryzae</name>
    <dbReference type="NCBI Taxonomy" id="242507"/>
    <lineage>
        <taxon>Eukaryota</taxon>
        <taxon>Fungi</taxon>
        <taxon>Dikarya</taxon>
        <taxon>Ascomycota</taxon>
        <taxon>Pezizomycotina</taxon>
        <taxon>Sordariomycetes</taxon>
        <taxon>Sordariomycetidae</taxon>
        <taxon>Magnaporthales</taxon>
        <taxon>Pyriculariaceae</taxon>
        <taxon>Pyricularia</taxon>
    </lineage>
</organism>
<comment type="function">
    <text evidence="3">Secreted effector involved in biotrophic colonization of plant cells.</text>
</comment>
<comment type="subcellular location">
    <subcellularLocation>
        <location evidence="3">Secreted</location>
    </subcellularLocation>
    <text evidence="3">Secreted into the biotrophic interfacial complexes (BICs).</text>
</comment>
<comment type="induction">
    <text evidence="3">Expression is highly up-regulated in invasive hyphae.</text>
</comment>
<feature type="signal peptide" evidence="1">
    <location>
        <begin position="1"/>
        <end position="19"/>
    </location>
</feature>
<feature type="chain" id="PRO_5007915084" description="Biotrophy-associated secreted protein 2">
    <location>
        <begin position="20"/>
        <end position="102"/>
    </location>
</feature>
<feature type="glycosylation site" description="N-linked (GlcNAc...) asparagine" evidence="2">
    <location>
        <position position="46"/>
    </location>
</feature>
<keyword id="KW-0325">Glycoprotein</keyword>
<keyword id="KW-1185">Reference proteome</keyword>
<keyword id="KW-0964">Secreted</keyword>
<keyword id="KW-0732">Signal</keyword>
<sequence length="102" mass="10416">MVRVSTFAAILAMALSVTANVTPNDAGAKNVGTGNGQQFITGGCVNGTDCQSRCCAGNGENKGVCSNEVAANQNGKTGCGFEDPNKAQTVKEAKEQVKKQGF</sequence>
<reference key="1">
    <citation type="journal article" date="2009" name="Plant Cell">
        <title>Interaction transcriptome analysis identifies Magnaporthe oryzae BAS1-4 as Biotrophy-associated secreted proteins in rice blast disease.</title>
        <authorList>
            <person name="Mosquera G."/>
            <person name="Giraldo M.C."/>
            <person name="Khang C.H."/>
            <person name="Coughlan S."/>
            <person name="Valent B."/>
        </authorList>
    </citation>
    <scope>NUCLEOTIDE SEQUENCE [GENOMIC DNA]</scope>
    <scope>INDUCTION</scope>
    <scope>FUNCTION</scope>
    <scope>SUBCELLULAR LOCATION</scope>
    <source>
        <strain>70-15 / ATCC MYA-4617 / FGSC 8958</strain>
    </source>
</reference>
<reference key="2">
    <citation type="journal article" date="2005" name="Nature">
        <title>The genome sequence of the rice blast fungus Magnaporthe grisea.</title>
        <authorList>
            <person name="Dean R.A."/>
            <person name="Talbot N.J."/>
            <person name="Ebbole D.J."/>
            <person name="Farman M.L."/>
            <person name="Mitchell T.K."/>
            <person name="Orbach M.J."/>
            <person name="Thon M.R."/>
            <person name="Kulkarni R."/>
            <person name="Xu J.-R."/>
            <person name="Pan H."/>
            <person name="Read N.D."/>
            <person name="Lee Y.-H."/>
            <person name="Carbone I."/>
            <person name="Brown D."/>
            <person name="Oh Y.Y."/>
            <person name="Donofrio N."/>
            <person name="Jeong J.S."/>
            <person name="Soanes D.M."/>
            <person name="Djonovic S."/>
            <person name="Kolomiets E."/>
            <person name="Rehmeyer C."/>
            <person name="Li W."/>
            <person name="Harding M."/>
            <person name="Kim S."/>
            <person name="Lebrun M.-H."/>
            <person name="Bohnert H."/>
            <person name="Coughlan S."/>
            <person name="Butler J."/>
            <person name="Calvo S.E."/>
            <person name="Ma L.-J."/>
            <person name="Nicol R."/>
            <person name="Purcell S."/>
            <person name="Nusbaum C."/>
            <person name="Galagan J.E."/>
            <person name="Birren B.W."/>
        </authorList>
    </citation>
    <scope>NUCLEOTIDE SEQUENCE [LARGE SCALE GENOMIC DNA]</scope>
    <source>
        <strain>70-15 / ATCC MYA-4617 / FGSC 8958</strain>
    </source>
</reference>